<protein>
    <recommendedName>
        <fullName evidence="1">V-type proton ATPase subunit E</fullName>
    </recommendedName>
    <alternativeName>
        <fullName evidence="1">V-ATPase subunit E</fullName>
    </alternativeName>
</protein>
<feature type="chain" id="PRO_1000119529" description="V-type proton ATPase subunit E">
    <location>
        <begin position="1"/>
        <end position="188"/>
    </location>
</feature>
<dbReference type="EMBL" id="CP001146">
    <property type="protein sequence ID" value="ACI18920.1"/>
    <property type="molecule type" value="Genomic_DNA"/>
</dbReference>
<dbReference type="RefSeq" id="WP_012547552.1">
    <property type="nucleotide sequence ID" value="NC_011297.1"/>
</dbReference>
<dbReference type="SMR" id="B5YFA5"/>
<dbReference type="STRING" id="309799.DICTH_1394"/>
<dbReference type="PaxDb" id="309799-DICTH_1394"/>
<dbReference type="KEGG" id="dth:DICTH_1394"/>
<dbReference type="eggNOG" id="ENOG503450Z">
    <property type="taxonomic scope" value="Bacteria"/>
</dbReference>
<dbReference type="HOGENOM" id="CLU_1438999_0_0_0"/>
<dbReference type="OrthoDB" id="9815230at2"/>
<dbReference type="Proteomes" id="UP000001733">
    <property type="component" value="Chromosome"/>
</dbReference>
<dbReference type="GO" id="GO:0033178">
    <property type="term" value="C:proton-transporting two-sector ATPase complex, catalytic domain"/>
    <property type="evidence" value="ECO:0007669"/>
    <property type="project" value="InterPro"/>
</dbReference>
<dbReference type="GO" id="GO:0005524">
    <property type="term" value="F:ATP binding"/>
    <property type="evidence" value="ECO:0007669"/>
    <property type="project" value="UniProtKB-UniRule"/>
</dbReference>
<dbReference type="GO" id="GO:0046933">
    <property type="term" value="F:proton-transporting ATP synthase activity, rotational mechanism"/>
    <property type="evidence" value="ECO:0007669"/>
    <property type="project" value="UniProtKB-UniRule"/>
</dbReference>
<dbReference type="GO" id="GO:0046961">
    <property type="term" value="F:proton-transporting ATPase activity, rotational mechanism"/>
    <property type="evidence" value="ECO:0007669"/>
    <property type="project" value="InterPro"/>
</dbReference>
<dbReference type="GO" id="GO:0042777">
    <property type="term" value="P:proton motive force-driven plasma membrane ATP synthesis"/>
    <property type="evidence" value="ECO:0007669"/>
    <property type="project" value="UniProtKB-UniRule"/>
</dbReference>
<dbReference type="Gene3D" id="3.30.2320.30">
    <property type="entry name" value="ATP synthase, E subunit, C-terminal"/>
    <property type="match status" value="1"/>
</dbReference>
<dbReference type="HAMAP" id="MF_00311">
    <property type="entry name" value="ATP_synth_E_arch"/>
    <property type="match status" value="1"/>
</dbReference>
<dbReference type="InterPro" id="IPR038495">
    <property type="entry name" value="ATPase_E_C"/>
</dbReference>
<dbReference type="InterPro" id="IPR002842">
    <property type="entry name" value="ATPase_V1_Esu"/>
</dbReference>
<dbReference type="SUPFAM" id="SSF160527">
    <property type="entry name" value="V-type ATPase subunit E-like"/>
    <property type="match status" value="1"/>
</dbReference>
<proteinExistence type="inferred from homology"/>
<evidence type="ECO:0000255" key="1">
    <source>
        <dbReference type="HAMAP-Rule" id="MF_00311"/>
    </source>
</evidence>
<comment type="function">
    <text evidence="1">Produces ATP from ADP in the presence of a proton gradient across the membrane.</text>
</comment>
<comment type="similarity">
    <text evidence="1">Belongs to the V-ATPase E subunit family.</text>
</comment>
<organism>
    <name type="scientific">Dictyoglomus thermophilum (strain ATCC 35947 / DSM 3960 / H-6-12)</name>
    <dbReference type="NCBI Taxonomy" id="309799"/>
    <lineage>
        <taxon>Bacteria</taxon>
        <taxon>Pseudomonadati</taxon>
        <taxon>Dictyoglomota</taxon>
        <taxon>Dictyoglomia</taxon>
        <taxon>Dictyoglomales</taxon>
        <taxon>Dictyoglomaceae</taxon>
        <taxon>Dictyoglomus</taxon>
    </lineage>
</organism>
<reference key="1">
    <citation type="journal article" date="2014" name="Genome Announc.">
        <title>Complete Genome Sequence of the Extreme Thermophile Dictyoglomus thermophilum H-6-12.</title>
        <authorList>
            <person name="Coil D.A."/>
            <person name="Badger J.H."/>
            <person name="Forberger H.C."/>
            <person name="Riggs F."/>
            <person name="Madupu R."/>
            <person name="Fedorova N."/>
            <person name="Ward N."/>
            <person name="Robb F.T."/>
            <person name="Eisen J.A."/>
        </authorList>
    </citation>
    <scope>NUCLEOTIDE SEQUENCE [LARGE SCALE GENOMIC DNA]</scope>
    <source>
        <strain>ATCC 35947 / DSM 3960 / H-6-12</strain>
    </source>
</reference>
<gene>
    <name evidence="1" type="primary">atpE</name>
    <name type="ordered locus">DICTH_1394</name>
</gene>
<sequence length="188" mass="22245">MSLERIVERLETEKRTKIEEIKNKKEKEFQEFVAKKEKELEEWKEKQKRSLKEKLNREENTLAAQLKLKYNAEKLRIESDAIAKVKNLVLERLKSSSNEVYNKIWENLLERESIKSGEMILTKNEDKIDVDYFCKKYSLTLSKDRMEGNGGFVIQKDNLVIDLTVDTIIEELVNKNILEIAQILHGER</sequence>
<name>VATE_DICT6</name>
<accession>B5YFA5</accession>
<keyword id="KW-0066">ATP synthesis</keyword>
<keyword id="KW-0375">Hydrogen ion transport</keyword>
<keyword id="KW-0406">Ion transport</keyword>
<keyword id="KW-0813">Transport</keyword>